<protein>
    <recommendedName>
        <fullName>Serine protease SplF</fullName>
        <ecNumber>3.4.21.-</ecNumber>
    </recommendedName>
</protein>
<keyword id="KW-0378">Hydrolase</keyword>
<keyword id="KW-0645">Protease</keyword>
<keyword id="KW-0964">Secreted</keyword>
<keyword id="KW-0720">Serine protease</keyword>
<keyword id="KW-0732">Signal</keyword>
<proteinExistence type="inferred from homology"/>
<gene>
    <name type="primary">splF</name>
    <name type="ordered locus">USA300HOU_1801</name>
</gene>
<name>SPLF_STAAT</name>
<accession>A8Z4N4</accession>
<dbReference type="EC" id="3.4.21.-"/>
<dbReference type="EMBL" id="CP000730">
    <property type="protein sequence ID" value="ABX29804.1"/>
    <property type="molecule type" value="Genomic_DNA"/>
</dbReference>
<dbReference type="RefSeq" id="WP_001038688.1">
    <property type="nucleotide sequence ID" value="NC_010079.1"/>
</dbReference>
<dbReference type="SMR" id="A8Z4N4"/>
<dbReference type="MEROPS" id="S01.526"/>
<dbReference type="KEGG" id="sax:USA300HOU_1801"/>
<dbReference type="HOGENOM" id="CLU_073589_2_0_9"/>
<dbReference type="GO" id="GO:0005576">
    <property type="term" value="C:extracellular region"/>
    <property type="evidence" value="ECO:0007669"/>
    <property type="project" value="UniProtKB-SubCell"/>
</dbReference>
<dbReference type="GO" id="GO:0008236">
    <property type="term" value="F:serine-type peptidase activity"/>
    <property type="evidence" value="ECO:0007669"/>
    <property type="project" value="UniProtKB-KW"/>
</dbReference>
<dbReference type="GO" id="GO:0006508">
    <property type="term" value="P:proteolysis"/>
    <property type="evidence" value="ECO:0007669"/>
    <property type="project" value="UniProtKB-KW"/>
</dbReference>
<dbReference type="Gene3D" id="2.40.10.10">
    <property type="entry name" value="Trypsin-like serine proteases"/>
    <property type="match status" value="2"/>
</dbReference>
<dbReference type="InterPro" id="IPR009003">
    <property type="entry name" value="Peptidase_S1_PA"/>
</dbReference>
<dbReference type="InterPro" id="IPR043504">
    <property type="entry name" value="Peptidase_S1_PA_chymotrypsin"/>
</dbReference>
<dbReference type="InterPro" id="IPR008256">
    <property type="entry name" value="Peptidase_S1B"/>
</dbReference>
<dbReference type="InterPro" id="IPR028301">
    <property type="entry name" value="V8_his_AS"/>
</dbReference>
<dbReference type="PANTHER" id="PTHR43019:SF23">
    <property type="entry name" value="PROTEASE DO-LIKE 5, CHLOROPLASTIC"/>
    <property type="match status" value="1"/>
</dbReference>
<dbReference type="PANTHER" id="PTHR43019">
    <property type="entry name" value="SERINE ENDOPROTEASE DEGS"/>
    <property type="match status" value="1"/>
</dbReference>
<dbReference type="Pfam" id="PF13365">
    <property type="entry name" value="Trypsin_2"/>
    <property type="match status" value="1"/>
</dbReference>
<dbReference type="PRINTS" id="PR00839">
    <property type="entry name" value="V8PROTEASE"/>
</dbReference>
<dbReference type="SUPFAM" id="SSF50494">
    <property type="entry name" value="Trypsin-like serine proteases"/>
    <property type="match status" value="1"/>
</dbReference>
<dbReference type="PROSITE" id="PS00672">
    <property type="entry name" value="V8_HIS"/>
    <property type="match status" value="1"/>
</dbReference>
<reference key="1">
    <citation type="journal article" date="2007" name="BMC Microbiol.">
        <title>Subtle genetic changes enhance virulence of methicillin resistant and sensitive Staphylococcus aureus.</title>
        <authorList>
            <person name="Highlander S.K."/>
            <person name="Hulten K.G."/>
            <person name="Qin X."/>
            <person name="Jiang H."/>
            <person name="Yerrapragada S."/>
            <person name="Mason E.O. Jr."/>
            <person name="Shang Y."/>
            <person name="Williams T.M."/>
            <person name="Fortunov R.M."/>
            <person name="Liu Y."/>
            <person name="Igboeli O."/>
            <person name="Petrosino J."/>
            <person name="Tirumalai M."/>
            <person name="Uzman A."/>
            <person name="Fox G.E."/>
            <person name="Cardenas A.M."/>
            <person name="Muzny D.M."/>
            <person name="Hemphill L."/>
            <person name="Ding Y."/>
            <person name="Dugan S."/>
            <person name="Blyth P.R."/>
            <person name="Buhay C.J."/>
            <person name="Dinh H.H."/>
            <person name="Hawes A.C."/>
            <person name="Holder M."/>
            <person name="Kovar C.L."/>
            <person name="Lee S.L."/>
            <person name="Liu W."/>
            <person name="Nazareth L.V."/>
            <person name="Wang Q."/>
            <person name="Zhou J."/>
            <person name="Kaplan S.L."/>
            <person name="Weinstock G.M."/>
        </authorList>
    </citation>
    <scope>NUCLEOTIDE SEQUENCE [LARGE SCALE GENOMIC DNA]</scope>
    <source>
        <strain>USA300 / TCH1516</strain>
    </source>
</reference>
<comment type="subcellular location">
    <subcellularLocation>
        <location evidence="1">Secreted</location>
    </subcellularLocation>
</comment>
<comment type="similarity">
    <text evidence="2">Belongs to the peptidase S1B family.</text>
</comment>
<organism>
    <name type="scientific">Staphylococcus aureus (strain USA300 / TCH1516)</name>
    <dbReference type="NCBI Taxonomy" id="451516"/>
    <lineage>
        <taxon>Bacteria</taxon>
        <taxon>Bacillati</taxon>
        <taxon>Bacillota</taxon>
        <taxon>Bacilli</taxon>
        <taxon>Bacillales</taxon>
        <taxon>Staphylococcaceae</taxon>
        <taxon>Staphylococcus</taxon>
    </lineage>
</organism>
<evidence type="ECO:0000250" key="1"/>
<evidence type="ECO:0000305" key="2"/>
<sequence>MNKNIIIKSIAALTILTSITGVGTTMVEGIQQTAKAENTVKQITNTNVAPYSGVTWMGAGTGFVVGNHTIITNKHVTYHMKVGDEIKAHPNGFYNNGGGLYKVTKIVDYPGKEDIAVVQVEEKSTQPKGRKFKDFTSKFNIASEAKENEPISVIGYPNPNGNKLQMYESTGKVLSVNGNIVSSDAIIQPGSSGSPILNSKHEAIGVIYAGNKPSGESTRGFAVYFSPEIKKFIADNLDK</sequence>
<feature type="signal peptide" evidence="1">
    <location>
        <begin position="1"/>
        <end position="36"/>
    </location>
</feature>
<feature type="chain" id="PRO_0000359587" description="Serine protease SplF">
    <location>
        <begin position="37"/>
        <end position="239"/>
    </location>
</feature>
<feature type="active site" description="Charge relay system" evidence="1">
    <location>
        <position position="75"/>
    </location>
</feature>
<feature type="active site" description="Charge relay system" evidence="1">
    <location>
        <position position="114"/>
    </location>
</feature>
<feature type="active site" description="Charge relay system" evidence="1">
    <location>
        <position position="192"/>
    </location>
</feature>